<name>SPDE3_HUMAN</name>
<proteinExistence type="evidence at transcript level"/>
<accession>A6NKU9</accession>
<accession>Q495Y9</accession>
<accession>Q6PHC4</accession>
<gene>
    <name evidence="5" type="primary">SPDYE3</name>
</gene>
<feature type="chain" id="PRO_0000342336" description="Speedy protein E3">
    <location>
        <begin position="1"/>
        <end position="549"/>
    </location>
</feature>
<feature type="region of interest" description="Disordered" evidence="1">
    <location>
        <begin position="1"/>
        <end position="74"/>
    </location>
</feature>
<feature type="region of interest" description="Disordered" evidence="1">
    <location>
        <begin position="126"/>
        <end position="145"/>
    </location>
</feature>
<feature type="region of interest" description="Disordered" evidence="1">
    <location>
        <begin position="188"/>
        <end position="218"/>
    </location>
</feature>
<feature type="region of interest" description="Disordered" evidence="1">
    <location>
        <begin position="261"/>
        <end position="291"/>
    </location>
</feature>
<feature type="region of interest" description="Disordered" evidence="1">
    <location>
        <begin position="334"/>
        <end position="364"/>
    </location>
</feature>
<feature type="compositionally biased region" description="Low complexity" evidence="1">
    <location>
        <begin position="1"/>
        <end position="15"/>
    </location>
</feature>
<feature type="compositionally biased region" description="Acidic residues" evidence="1">
    <location>
        <begin position="58"/>
        <end position="74"/>
    </location>
</feature>
<feature type="compositionally biased region" description="Acidic residues" evidence="1">
    <location>
        <begin position="131"/>
        <end position="145"/>
    </location>
</feature>
<feature type="compositionally biased region" description="Acidic residues" evidence="1">
    <location>
        <begin position="204"/>
        <end position="218"/>
    </location>
</feature>
<feature type="compositionally biased region" description="Acidic residues" evidence="1">
    <location>
        <begin position="277"/>
        <end position="291"/>
    </location>
</feature>
<feature type="compositionally biased region" description="Acidic residues" evidence="1">
    <location>
        <begin position="350"/>
        <end position="364"/>
    </location>
</feature>
<feature type="splice variant" id="VSP_040737" description="In isoform 2." evidence="3">
    <location>
        <begin position="1"/>
        <end position="377"/>
    </location>
</feature>
<feature type="sequence conflict" description="In Ref. 2; AAH56606." evidence="4" ref="2">
    <original>D</original>
    <variation>G</variation>
    <location>
        <position position="414"/>
    </location>
</feature>
<sequence>MTSHQPQPQEEQSPQRSTSGYPLQEVVDDEVSGPSAPGVDPSPPRRSLGCKRKRECLDESDDEPEKELAPEPEETWVAETLCGLKMKAKRRRVSLVLPEYYEAFNRLLAPGVDPSPPRRSLGCKRKRECLDESDDEPEKELAPEPEETWVAETLCGLKMKAKRRRVSLVLPEYYEAFNRLLAPGVDPSPPRRSLGCKRKRECLDESDDEPEKELAPEPEETWVAETLCGLKMKAKRRRVSLVLPEYYEAFNRLLAPGVDPSPPRRSLGCKRKRECLDESDDEPEKELAPEPEETWVAETLCGLKMKAKRRRVSLVLPEYYEAFNRLLAPGVDPSPPRRSLGCKRKRECLDESDDEPEKELAPEPEETWVAETLCGLKMKAKRRRVSLVLPEYYEAFNRLLEDPVIKRFLAWDKDLRVSDKYLLAMVIAYFSRAGLPSWQYQRIHFFLALYLANDMEEDDEAPKQKIFYFLYGKTHSHIPLRPKHWFQLCRPMNPRARKNCSQIALFQKRRFQFFCSMRCRAWVSPEELEEIQAYDPEHWVWARDRAHLS</sequence>
<comment type="alternative products">
    <event type="alternative splicing"/>
    <isoform>
        <id>A6NKU9-1</id>
        <name>1</name>
        <sequence type="displayed"/>
    </isoform>
    <isoform>
        <id>A6NKU9-2</id>
        <name>2</name>
        <sequence type="described" ref="VSP_040737"/>
    </isoform>
</comment>
<comment type="tissue specificity">
    <text evidence="2">Predominantly expressed in testis and spleen.</text>
</comment>
<comment type="similarity">
    <text evidence="4">Belongs to the Speedy/Ringo family.</text>
</comment>
<organism>
    <name type="scientific">Homo sapiens</name>
    <name type="common">Human</name>
    <dbReference type="NCBI Taxonomy" id="9606"/>
    <lineage>
        <taxon>Eukaryota</taxon>
        <taxon>Metazoa</taxon>
        <taxon>Chordata</taxon>
        <taxon>Craniata</taxon>
        <taxon>Vertebrata</taxon>
        <taxon>Euteleostomi</taxon>
        <taxon>Mammalia</taxon>
        <taxon>Eutheria</taxon>
        <taxon>Euarchontoglires</taxon>
        <taxon>Primates</taxon>
        <taxon>Haplorrhini</taxon>
        <taxon>Catarrhini</taxon>
        <taxon>Hominidae</taxon>
        <taxon>Homo</taxon>
    </lineage>
</organism>
<keyword id="KW-0025">Alternative splicing</keyword>
<keyword id="KW-1185">Reference proteome</keyword>
<protein>
    <recommendedName>
        <fullName evidence="4">Speedy protein E3</fullName>
    </recommendedName>
</protein>
<reference key="1">
    <citation type="journal article" date="2003" name="Nature">
        <title>The DNA sequence of human chromosome 7.</title>
        <authorList>
            <person name="Hillier L.W."/>
            <person name="Fulton R.S."/>
            <person name="Fulton L.A."/>
            <person name="Graves T.A."/>
            <person name="Pepin K.H."/>
            <person name="Wagner-McPherson C."/>
            <person name="Layman D."/>
            <person name="Maas J."/>
            <person name="Jaeger S."/>
            <person name="Walker R."/>
            <person name="Wylie K."/>
            <person name="Sekhon M."/>
            <person name="Becker M.C."/>
            <person name="O'Laughlin M.D."/>
            <person name="Schaller M.E."/>
            <person name="Fewell G.A."/>
            <person name="Delehaunty K.D."/>
            <person name="Miner T.L."/>
            <person name="Nash W.E."/>
            <person name="Cordes M."/>
            <person name="Du H."/>
            <person name="Sun H."/>
            <person name="Edwards J."/>
            <person name="Bradshaw-Cordum H."/>
            <person name="Ali J."/>
            <person name="Andrews S."/>
            <person name="Isak A."/>
            <person name="Vanbrunt A."/>
            <person name="Nguyen C."/>
            <person name="Du F."/>
            <person name="Lamar B."/>
            <person name="Courtney L."/>
            <person name="Kalicki J."/>
            <person name="Ozersky P."/>
            <person name="Bielicki L."/>
            <person name="Scott K."/>
            <person name="Holmes A."/>
            <person name="Harkins R."/>
            <person name="Harris A."/>
            <person name="Strong C.M."/>
            <person name="Hou S."/>
            <person name="Tomlinson C."/>
            <person name="Dauphin-Kohlberg S."/>
            <person name="Kozlowicz-Reilly A."/>
            <person name="Leonard S."/>
            <person name="Rohlfing T."/>
            <person name="Rock S.M."/>
            <person name="Tin-Wollam A.-M."/>
            <person name="Abbott A."/>
            <person name="Minx P."/>
            <person name="Maupin R."/>
            <person name="Strowmatt C."/>
            <person name="Latreille P."/>
            <person name="Miller N."/>
            <person name="Johnson D."/>
            <person name="Murray J."/>
            <person name="Woessner J.P."/>
            <person name="Wendl M.C."/>
            <person name="Yang S.-P."/>
            <person name="Schultz B.R."/>
            <person name="Wallis J.W."/>
            <person name="Spieth J."/>
            <person name="Bieri T.A."/>
            <person name="Nelson J.O."/>
            <person name="Berkowicz N."/>
            <person name="Wohldmann P.E."/>
            <person name="Cook L.L."/>
            <person name="Hickenbotham M.T."/>
            <person name="Eldred J."/>
            <person name="Williams D."/>
            <person name="Bedell J.A."/>
            <person name="Mardis E.R."/>
            <person name="Clifton S.W."/>
            <person name="Chissoe S.L."/>
            <person name="Marra M.A."/>
            <person name="Raymond C."/>
            <person name="Haugen E."/>
            <person name="Gillett W."/>
            <person name="Zhou Y."/>
            <person name="James R."/>
            <person name="Phelps K."/>
            <person name="Iadanoto S."/>
            <person name="Bubb K."/>
            <person name="Simms E."/>
            <person name="Levy R."/>
            <person name="Clendenning J."/>
            <person name="Kaul R."/>
            <person name="Kent W.J."/>
            <person name="Furey T.S."/>
            <person name="Baertsch R.A."/>
            <person name="Brent M.R."/>
            <person name="Keibler E."/>
            <person name="Flicek P."/>
            <person name="Bork P."/>
            <person name="Suyama M."/>
            <person name="Bailey J.A."/>
            <person name="Portnoy M.E."/>
            <person name="Torrents D."/>
            <person name="Chinwalla A.T."/>
            <person name="Gish W.R."/>
            <person name="Eddy S.R."/>
            <person name="McPherson J.D."/>
            <person name="Olson M.V."/>
            <person name="Eichler E.E."/>
            <person name="Green E.D."/>
            <person name="Waterston R.H."/>
            <person name="Wilson R.K."/>
        </authorList>
    </citation>
    <scope>NUCLEOTIDE SEQUENCE [LARGE SCALE GENOMIC DNA]</scope>
</reference>
<reference key="2">
    <citation type="submission" date="2004-06" db="EMBL/GenBank/DDBJ databases">
        <authorList>
            <person name="Mural R.J."/>
            <person name="Istrail S."/>
            <person name="Sutton G.G."/>
            <person name="Florea L."/>
            <person name="Halpern A.L."/>
            <person name="Mobarry C.M."/>
            <person name="Lippert R."/>
            <person name="Walenz B."/>
            <person name="Shatkay H."/>
            <person name="Dew I."/>
            <person name="Miller J.R."/>
            <person name="Flanigan M.J."/>
            <person name="Edwards N.J."/>
            <person name="Bolanos R."/>
            <person name="Fasulo D."/>
            <person name="Halldorsson B.V."/>
            <person name="Hannenhalli S."/>
            <person name="Turner R."/>
            <person name="Yooseph S."/>
            <person name="Lu F."/>
            <person name="Nusskern D.R."/>
            <person name="Shue B.C."/>
            <person name="Zheng X.H."/>
            <person name="Zhong F."/>
            <person name="Delcher A.L."/>
            <person name="Huson D.H."/>
            <person name="Kravitz S.A."/>
            <person name="Mouchard L."/>
            <person name="Reinert K."/>
            <person name="Remington K.A."/>
            <person name="Clark A.G."/>
            <person name="Waterman M.S."/>
            <person name="Eichler E.E."/>
            <person name="Adams M.D."/>
            <person name="Hunkapiller M.W."/>
            <person name="Myers E.W."/>
            <person name="Venter J.C."/>
        </authorList>
    </citation>
    <scope>NUCLEOTIDE SEQUENCE [LARGE SCALE GENOMIC DNA]</scope>
</reference>
<reference key="3">
    <citation type="journal article" date="2004" name="Genome Res.">
        <title>The status, quality, and expansion of the NIH full-length cDNA project: the Mammalian Gene Collection (MGC).</title>
        <authorList>
            <consortium name="The MGC Project Team"/>
        </authorList>
    </citation>
    <scope>NUCLEOTIDE SEQUENCE [LARGE SCALE MRNA] (ISOFORMS 1 AND 2)</scope>
    <source>
        <tissue>Testis</tissue>
    </source>
</reference>
<reference key="4">
    <citation type="journal article" date="2012" name="Cell. Mol. Life Sci.">
        <title>Evolution of the Cdk-activator Speedy/RINGO in vertebrates.</title>
        <authorList>
            <person name="Chauhan S."/>
            <person name="Zheng X."/>
            <person name="Tan Y.Y."/>
            <person name="Tay B.H."/>
            <person name="Lim S."/>
            <person name="Venkatesh B."/>
            <person name="Kaldis P."/>
        </authorList>
    </citation>
    <scope>TISSUE SPECIFICITY</scope>
</reference>
<evidence type="ECO:0000256" key="1">
    <source>
        <dbReference type="SAM" id="MobiDB-lite"/>
    </source>
</evidence>
<evidence type="ECO:0000269" key="2">
    <source>
    </source>
</evidence>
<evidence type="ECO:0000303" key="3">
    <source>
    </source>
</evidence>
<evidence type="ECO:0000305" key="4"/>
<evidence type="ECO:0000312" key="5">
    <source>
        <dbReference type="HGNC" id="HGNC:35462"/>
    </source>
</evidence>
<dbReference type="EMBL" id="AC005071">
    <property type="status" value="NOT_ANNOTATED_CDS"/>
    <property type="molecule type" value="Genomic_DNA"/>
</dbReference>
<dbReference type="EMBL" id="CH236956">
    <property type="protein sequence ID" value="EAL23843.1"/>
    <property type="molecule type" value="Genomic_DNA"/>
</dbReference>
<dbReference type="EMBL" id="BC100972">
    <property type="protein sequence ID" value="AAI00973.1"/>
    <property type="molecule type" value="mRNA"/>
</dbReference>
<dbReference type="EMBL" id="BC056606">
    <property type="protein sequence ID" value="AAH56606.1"/>
    <property type="molecule type" value="mRNA"/>
</dbReference>
<dbReference type="CCDS" id="CCDS47658.2">
    <molecule id="A6NKU9-1"/>
</dbReference>
<dbReference type="RefSeq" id="NP_001004351.3">
    <molecule id="A6NKU9-1"/>
    <property type="nucleotide sequence ID" value="NM_001004351.5"/>
</dbReference>
<dbReference type="RefSeq" id="XP_047276360.1">
    <molecule id="A6NKU9-1"/>
    <property type="nucleotide sequence ID" value="XM_047420404.1"/>
</dbReference>
<dbReference type="RefSeq" id="XP_054214235.1">
    <molecule id="A6NKU9-1"/>
    <property type="nucleotide sequence ID" value="XM_054358260.1"/>
</dbReference>
<dbReference type="SMR" id="A6NKU9"/>
<dbReference type="BioGRID" id="137320">
    <property type="interactions" value="2"/>
</dbReference>
<dbReference type="FunCoup" id="A6NKU9">
    <property type="interactions" value="158"/>
</dbReference>
<dbReference type="IntAct" id="A6NKU9">
    <property type="interactions" value="1"/>
</dbReference>
<dbReference type="STRING" id="9606.ENSP00000329565"/>
<dbReference type="iPTMnet" id="A6NKU9"/>
<dbReference type="PhosphoSitePlus" id="A6NKU9"/>
<dbReference type="BioMuta" id="SPDYE3"/>
<dbReference type="MassIVE" id="A6NKU9"/>
<dbReference type="PaxDb" id="9606-ENSP00000329565"/>
<dbReference type="Antibodypedia" id="54849">
    <property type="antibodies" value="76 antibodies from 12 providers"/>
</dbReference>
<dbReference type="DNASU" id="441272"/>
<dbReference type="Ensembl" id="ENST00000332397.6">
    <molecule id="A6NKU9-1"/>
    <property type="protein sequence ID" value="ENSP00000329565.6"/>
    <property type="gene ID" value="ENSG00000214300.8"/>
</dbReference>
<dbReference type="GeneID" id="441272"/>
<dbReference type="KEGG" id="hsa:441272"/>
<dbReference type="MANE-Select" id="ENST00000332397.6">
    <property type="protein sequence ID" value="ENSP00000329565.6"/>
    <property type="RefSeq nucleotide sequence ID" value="NM_001004351.5"/>
    <property type="RefSeq protein sequence ID" value="NP_001004351.3"/>
</dbReference>
<dbReference type="UCSC" id="uc022aij.1">
    <molecule id="A6NKU9-1"/>
    <property type="organism name" value="human"/>
</dbReference>
<dbReference type="AGR" id="HGNC:35462"/>
<dbReference type="CTD" id="441272"/>
<dbReference type="GeneCards" id="SPDYE3"/>
<dbReference type="HGNC" id="HGNC:35462">
    <property type="gene designation" value="SPDYE3"/>
</dbReference>
<dbReference type="HPA" id="ENSG00000214300">
    <property type="expression patterns" value="Tissue enriched (testis)"/>
</dbReference>
<dbReference type="MIM" id="617625">
    <property type="type" value="gene"/>
</dbReference>
<dbReference type="neXtProt" id="NX_A6NKU9"/>
<dbReference type="NIAGADS" id="ENSG00000214300"/>
<dbReference type="PharmGKB" id="PA164726234"/>
<dbReference type="VEuPathDB" id="HostDB:ENSG00000214300"/>
<dbReference type="eggNOG" id="ENOG502SSQN">
    <property type="taxonomic scope" value="Eukaryota"/>
</dbReference>
<dbReference type="GeneTree" id="ENSGT00940000154173"/>
<dbReference type="HOGENOM" id="CLU_496022_0_0_1"/>
<dbReference type="InParanoid" id="A6NKU9"/>
<dbReference type="PAN-GO" id="A6NKU9">
    <property type="GO annotations" value="1 GO annotation based on evolutionary models"/>
</dbReference>
<dbReference type="PhylomeDB" id="A6NKU9"/>
<dbReference type="TreeFam" id="TF329827"/>
<dbReference type="PathwayCommons" id="A6NKU9"/>
<dbReference type="BioGRID-ORCS" id="441272">
    <property type="hits" value="18 hits in 781 CRISPR screens"/>
</dbReference>
<dbReference type="ChiTaRS" id="SPDYE3">
    <property type="organism name" value="human"/>
</dbReference>
<dbReference type="GenomeRNAi" id="441272"/>
<dbReference type="Pharos" id="A6NKU9">
    <property type="development level" value="Tdark"/>
</dbReference>
<dbReference type="PRO" id="PR:A6NKU9"/>
<dbReference type="Proteomes" id="UP000005640">
    <property type="component" value="Chromosome 7"/>
</dbReference>
<dbReference type="RNAct" id="A6NKU9">
    <property type="molecule type" value="protein"/>
</dbReference>
<dbReference type="Bgee" id="ENSG00000214300">
    <property type="expression patterns" value="Expressed in male germ line stem cell (sensu Vertebrata) in testis and 103 other cell types or tissues"/>
</dbReference>
<dbReference type="GO" id="GO:0019901">
    <property type="term" value="F:protein kinase binding"/>
    <property type="evidence" value="ECO:0000318"/>
    <property type="project" value="GO_Central"/>
</dbReference>
<dbReference type="InterPro" id="IPR020984">
    <property type="entry name" value="Speedy"/>
</dbReference>
<dbReference type="PANTHER" id="PTHR31156">
    <property type="entry name" value="WBSCR19-LIKE PROTEIN"/>
    <property type="match status" value="1"/>
</dbReference>
<dbReference type="Pfam" id="PF11357">
    <property type="entry name" value="Spy1"/>
    <property type="match status" value="1"/>
</dbReference>